<name>UVRC_BACC4</name>
<keyword id="KW-0963">Cytoplasm</keyword>
<keyword id="KW-0227">DNA damage</keyword>
<keyword id="KW-0228">DNA excision</keyword>
<keyword id="KW-0234">DNA repair</keyword>
<keyword id="KW-0267">Excision nuclease</keyword>
<keyword id="KW-0742">SOS response</keyword>
<feature type="chain" id="PRO_1000200570" description="UvrABC system protein C">
    <location>
        <begin position="1"/>
        <end position="594"/>
    </location>
</feature>
<feature type="domain" description="GIY-YIG" evidence="1">
    <location>
        <begin position="14"/>
        <end position="91"/>
    </location>
</feature>
<feature type="domain" description="UVR" evidence="1">
    <location>
        <begin position="196"/>
        <end position="231"/>
    </location>
</feature>
<sequence>MHEHLKEKLAILPDQPGCYLMKDKQGTVIYVGKAKVLKNRVRSYFTGSHDGKTLRLVGEIVDFEYIVTSSNLEALILELNLIKKYDPKYNIQLKDDKTYPFIKITAEKQPRLLITRNVKKDKGKYFGPYPNAQSAHETKKLLDRMYPLRKCTNMPDKVCLYYHMGQCLAPCVKEVTEEQNKEIVDEIIKFLNGGHKEVRSELEIKMYEASEKLEFERAKELRDQIAHIDAIMEKQKMIMSDLVDRDVFGYAVDKGWMCVQVFFVRKGKLIERDVSMFPIYDEPEEGFLTFIGQFYENSSHFKPKEIVVPGSIDSELVERFLEVEATQPKRGKKKDLVELANKNAKIALEEKFYLIERDEERTIKAVDHLGKQLGIETPYRIEAFDNSNIQGTNPVSAMIAFIDGKPAKKEYRKYKIKTVQGPDDYESMREVVRRRYTRALKENSPLPDLIIIDGGKGHLAAASDILENELGLYIPMAGLVKDDKHKTSHLIIGVPPEPVMLERNSQEFYLLQRIQDEVHRFAITFHRQLHGKSVIQSALDDIPGIGDKRKKVLLKHFGSLKKMKEASIEEFVEAGMPKNVAETIYTYLTDKKTL</sequence>
<proteinExistence type="inferred from homology"/>
<organism>
    <name type="scientific">Bacillus cereus (strain B4264)</name>
    <dbReference type="NCBI Taxonomy" id="405532"/>
    <lineage>
        <taxon>Bacteria</taxon>
        <taxon>Bacillati</taxon>
        <taxon>Bacillota</taxon>
        <taxon>Bacilli</taxon>
        <taxon>Bacillales</taxon>
        <taxon>Bacillaceae</taxon>
        <taxon>Bacillus</taxon>
        <taxon>Bacillus cereus group</taxon>
    </lineage>
</organism>
<comment type="function">
    <text evidence="1">The UvrABC repair system catalyzes the recognition and processing of DNA lesions. UvrC both incises the 5' and 3' sides of the lesion. The N-terminal half is responsible for the 3' incision and the C-terminal half is responsible for the 5' incision.</text>
</comment>
<comment type="subunit">
    <text evidence="1">Interacts with UvrB in an incision complex.</text>
</comment>
<comment type="subcellular location">
    <subcellularLocation>
        <location evidence="1">Cytoplasm</location>
    </subcellularLocation>
</comment>
<comment type="similarity">
    <text evidence="1">Belongs to the UvrC family.</text>
</comment>
<reference key="1">
    <citation type="submission" date="2008-10" db="EMBL/GenBank/DDBJ databases">
        <title>Genome sequence of Bacillus cereus B4264.</title>
        <authorList>
            <person name="Dodson R.J."/>
            <person name="Durkin A.S."/>
            <person name="Rosovitz M.J."/>
            <person name="Rasko D.A."/>
            <person name="Hoffmaster A."/>
            <person name="Ravel J."/>
            <person name="Sutton G."/>
        </authorList>
    </citation>
    <scope>NUCLEOTIDE SEQUENCE [LARGE SCALE GENOMIC DNA]</scope>
    <source>
        <strain>B4264</strain>
    </source>
</reference>
<protein>
    <recommendedName>
        <fullName evidence="1">UvrABC system protein C</fullName>
        <shortName evidence="1">Protein UvrC</shortName>
    </recommendedName>
    <alternativeName>
        <fullName evidence="1">Excinuclease ABC subunit C</fullName>
    </alternativeName>
</protein>
<evidence type="ECO:0000255" key="1">
    <source>
        <dbReference type="HAMAP-Rule" id="MF_00203"/>
    </source>
</evidence>
<gene>
    <name evidence="1" type="primary">uvrC</name>
    <name type="ordered locus">BCB4264_A4628</name>
</gene>
<dbReference type="EMBL" id="CP001176">
    <property type="protein sequence ID" value="ACK63190.1"/>
    <property type="molecule type" value="Genomic_DNA"/>
</dbReference>
<dbReference type="RefSeq" id="WP_000544298.1">
    <property type="nucleotide sequence ID" value="NC_011725.1"/>
</dbReference>
<dbReference type="SMR" id="B7HF33"/>
<dbReference type="KEGG" id="bcb:BCB4264_A4628"/>
<dbReference type="HOGENOM" id="CLU_014841_3_2_9"/>
<dbReference type="Proteomes" id="UP000007096">
    <property type="component" value="Chromosome"/>
</dbReference>
<dbReference type="GO" id="GO:0005737">
    <property type="term" value="C:cytoplasm"/>
    <property type="evidence" value="ECO:0007669"/>
    <property type="project" value="UniProtKB-SubCell"/>
</dbReference>
<dbReference type="GO" id="GO:0009380">
    <property type="term" value="C:excinuclease repair complex"/>
    <property type="evidence" value="ECO:0007669"/>
    <property type="project" value="InterPro"/>
</dbReference>
<dbReference type="GO" id="GO:0003677">
    <property type="term" value="F:DNA binding"/>
    <property type="evidence" value="ECO:0007669"/>
    <property type="project" value="UniProtKB-UniRule"/>
</dbReference>
<dbReference type="GO" id="GO:0009381">
    <property type="term" value="F:excinuclease ABC activity"/>
    <property type="evidence" value="ECO:0007669"/>
    <property type="project" value="UniProtKB-UniRule"/>
</dbReference>
<dbReference type="GO" id="GO:0006289">
    <property type="term" value="P:nucleotide-excision repair"/>
    <property type="evidence" value="ECO:0007669"/>
    <property type="project" value="UniProtKB-UniRule"/>
</dbReference>
<dbReference type="GO" id="GO:0009432">
    <property type="term" value="P:SOS response"/>
    <property type="evidence" value="ECO:0007669"/>
    <property type="project" value="UniProtKB-UniRule"/>
</dbReference>
<dbReference type="CDD" id="cd10434">
    <property type="entry name" value="GIY-YIG_UvrC_Cho"/>
    <property type="match status" value="1"/>
</dbReference>
<dbReference type="FunFam" id="1.10.150.20:FF:000005">
    <property type="entry name" value="UvrABC system protein C"/>
    <property type="match status" value="1"/>
</dbReference>
<dbReference type="FunFam" id="3.30.420.340:FF:000002">
    <property type="entry name" value="UvrABC system protein C"/>
    <property type="match status" value="1"/>
</dbReference>
<dbReference type="FunFam" id="3.40.1440.10:FF:000001">
    <property type="entry name" value="UvrABC system protein C"/>
    <property type="match status" value="1"/>
</dbReference>
<dbReference type="FunFam" id="4.10.860.10:FF:000002">
    <property type="entry name" value="UvrABC system protein C"/>
    <property type="match status" value="1"/>
</dbReference>
<dbReference type="Gene3D" id="1.10.150.20">
    <property type="entry name" value="5' to 3' exonuclease, C-terminal subdomain"/>
    <property type="match status" value="1"/>
</dbReference>
<dbReference type="Gene3D" id="3.40.1440.10">
    <property type="entry name" value="GIY-YIG endonuclease"/>
    <property type="match status" value="1"/>
</dbReference>
<dbReference type="Gene3D" id="4.10.860.10">
    <property type="entry name" value="UVR domain"/>
    <property type="match status" value="1"/>
</dbReference>
<dbReference type="Gene3D" id="3.30.420.340">
    <property type="entry name" value="UvrC, RNAse H endonuclease domain"/>
    <property type="match status" value="1"/>
</dbReference>
<dbReference type="HAMAP" id="MF_00203">
    <property type="entry name" value="UvrC"/>
    <property type="match status" value="1"/>
</dbReference>
<dbReference type="InterPro" id="IPR000305">
    <property type="entry name" value="GIY-YIG_endonuc"/>
</dbReference>
<dbReference type="InterPro" id="IPR035901">
    <property type="entry name" value="GIY-YIG_endonuc_sf"/>
</dbReference>
<dbReference type="InterPro" id="IPR047296">
    <property type="entry name" value="GIY-YIG_UvrC_Cho"/>
</dbReference>
<dbReference type="InterPro" id="IPR010994">
    <property type="entry name" value="RuvA_2-like"/>
</dbReference>
<dbReference type="InterPro" id="IPR001943">
    <property type="entry name" value="UVR_dom"/>
</dbReference>
<dbReference type="InterPro" id="IPR036876">
    <property type="entry name" value="UVR_dom_sf"/>
</dbReference>
<dbReference type="InterPro" id="IPR050066">
    <property type="entry name" value="UvrABC_protein_C"/>
</dbReference>
<dbReference type="InterPro" id="IPR004791">
    <property type="entry name" value="UvrC"/>
</dbReference>
<dbReference type="InterPro" id="IPR001162">
    <property type="entry name" value="UvrC_RNase_H_dom"/>
</dbReference>
<dbReference type="InterPro" id="IPR038476">
    <property type="entry name" value="UvrC_RNase_H_dom_sf"/>
</dbReference>
<dbReference type="NCBIfam" id="NF001824">
    <property type="entry name" value="PRK00558.1-5"/>
    <property type="match status" value="1"/>
</dbReference>
<dbReference type="NCBIfam" id="TIGR00194">
    <property type="entry name" value="uvrC"/>
    <property type="match status" value="1"/>
</dbReference>
<dbReference type="PANTHER" id="PTHR30562:SF1">
    <property type="entry name" value="UVRABC SYSTEM PROTEIN C"/>
    <property type="match status" value="1"/>
</dbReference>
<dbReference type="PANTHER" id="PTHR30562">
    <property type="entry name" value="UVRC/OXIDOREDUCTASE"/>
    <property type="match status" value="1"/>
</dbReference>
<dbReference type="Pfam" id="PF01541">
    <property type="entry name" value="GIY-YIG"/>
    <property type="match status" value="1"/>
</dbReference>
<dbReference type="Pfam" id="PF02151">
    <property type="entry name" value="UVR"/>
    <property type="match status" value="1"/>
</dbReference>
<dbReference type="Pfam" id="PF22920">
    <property type="entry name" value="UvrC_RNaseH"/>
    <property type="match status" value="1"/>
</dbReference>
<dbReference type="Pfam" id="PF08459">
    <property type="entry name" value="UvrC_RNaseH_dom"/>
    <property type="match status" value="1"/>
</dbReference>
<dbReference type="SMART" id="SM00465">
    <property type="entry name" value="GIYc"/>
    <property type="match status" value="1"/>
</dbReference>
<dbReference type="SUPFAM" id="SSF46600">
    <property type="entry name" value="C-terminal UvrC-binding domain of UvrB"/>
    <property type="match status" value="1"/>
</dbReference>
<dbReference type="SUPFAM" id="SSF82771">
    <property type="entry name" value="GIY-YIG endonuclease"/>
    <property type="match status" value="1"/>
</dbReference>
<dbReference type="SUPFAM" id="SSF47781">
    <property type="entry name" value="RuvA domain 2-like"/>
    <property type="match status" value="1"/>
</dbReference>
<dbReference type="PROSITE" id="PS50164">
    <property type="entry name" value="GIY_YIG"/>
    <property type="match status" value="1"/>
</dbReference>
<dbReference type="PROSITE" id="PS50151">
    <property type="entry name" value="UVR"/>
    <property type="match status" value="1"/>
</dbReference>
<dbReference type="PROSITE" id="PS50165">
    <property type="entry name" value="UVRC"/>
    <property type="match status" value="1"/>
</dbReference>
<accession>B7HF33</accession>